<name>PGK_EUPCR</name>
<protein>
    <recommendedName>
        <fullName>Phosphoglycerate kinase</fullName>
        <ecNumber evidence="2">2.7.2.3</ecNumber>
    </recommendedName>
</protein>
<comment type="catalytic activity">
    <reaction evidence="2">
        <text>(2R)-3-phosphoglycerate + ATP = (2R)-3-phospho-glyceroyl phosphate + ADP</text>
        <dbReference type="Rhea" id="RHEA:14801"/>
        <dbReference type="ChEBI" id="CHEBI:30616"/>
        <dbReference type="ChEBI" id="CHEBI:57604"/>
        <dbReference type="ChEBI" id="CHEBI:58272"/>
        <dbReference type="ChEBI" id="CHEBI:456216"/>
        <dbReference type="EC" id="2.7.2.3"/>
    </reaction>
</comment>
<comment type="cofactor">
    <cofactor evidence="2">
        <name>Mg(2+)</name>
        <dbReference type="ChEBI" id="CHEBI:18420"/>
    </cofactor>
</comment>
<comment type="pathway">
    <text>Carbohydrate degradation; glycolysis; pyruvate from D-glyceraldehyde 3-phosphate: step 2/5.</text>
</comment>
<comment type="subunit">
    <text evidence="1">Monomer.</text>
</comment>
<comment type="similarity">
    <text evidence="4">Belongs to the phosphoglycerate kinase family.</text>
</comment>
<evidence type="ECO:0000250" key="1"/>
<evidence type="ECO:0000250" key="2">
    <source>
        <dbReference type="UniProtKB" id="P00558"/>
    </source>
</evidence>
<evidence type="ECO:0000250" key="3">
    <source>
        <dbReference type="UniProtKB" id="Q7SIB7"/>
    </source>
</evidence>
<evidence type="ECO:0000305" key="4"/>
<dbReference type="EC" id="2.7.2.3" evidence="2"/>
<dbReference type="EMBL" id="U97355">
    <property type="protein sequence ID" value="AAB58162.1"/>
    <property type="molecule type" value="Genomic_DNA"/>
</dbReference>
<dbReference type="SMR" id="O02608"/>
<dbReference type="UniPathway" id="UPA00109">
    <property type="reaction ID" value="UER00185"/>
</dbReference>
<dbReference type="GO" id="GO:0005829">
    <property type="term" value="C:cytosol"/>
    <property type="evidence" value="ECO:0007669"/>
    <property type="project" value="TreeGrafter"/>
</dbReference>
<dbReference type="GO" id="GO:0043531">
    <property type="term" value="F:ADP binding"/>
    <property type="evidence" value="ECO:0007669"/>
    <property type="project" value="TreeGrafter"/>
</dbReference>
<dbReference type="GO" id="GO:0005524">
    <property type="term" value="F:ATP binding"/>
    <property type="evidence" value="ECO:0007669"/>
    <property type="project" value="UniProtKB-KW"/>
</dbReference>
<dbReference type="GO" id="GO:0046872">
    <property type="term" value="F:metal ion binding"/>
    <property type="evidence" value="ECO:0007669"/>
    <property type="project" value="UniProtKB-KW"/>
</dbReference>
<dbReference type="GO" id="GO:0004618">
    <property type="term" value="F:phosphoglycerate kinase activity"/>
    <property type="evidence" value="ECO:0007669"/>
    <property type="project" value="UniProtKB-EC"/>
</dbReference>
<dbReference type="GO" id="GO:0006094">
    <property type="term" value="P:gluconeogenesis"/>
    <property type="evidence" value="ECO:0007669"/>
    <property type="project" value="TreeGrafter"/>
</dbReference>
<dbReference type="GO" id="GO:0006096">
    <property type="term" value="P:glycolytic process"/>
    <property type="evidence" value="ECO:0007669"/>
    <property type="project" value="UniProtKB-UniPathway"/>
</dbReference>
<dbReference type="CDD" id="cd00318">
    <property type="entry name" value="Phosphoglycerate_kinase"/>
    <property type="match status" value="1"/>
</dbReference>
<dbReference type="FunFam" id="3.40.50.1260:FF:000003">
    <property type="entry name" value="Phosphoglycerate kinase"/>
    <property type="match status" value="1"/>
</dbReference>
<dbReference type="FunFam" id="3.40.50.1260:FF:000019">
    <property type="entry name" value="Phosphoglycerate kinase 1"/>
    <property type="match status" value="1"/>
</dbReference>
<dbReference type="Gene3D" id="3.40.50.1260">
    <property type="entry name" value="Phosphoglycerate kinase, N-terminal domain"/>
    <property type="match status" value="3"/>
</dbReference>
<dbReference type="HAMAP" id="MF_00145">
    <property type="entry name" value="Phosphoglyc_kinase"/>
    <property type="match status" value="1"/>
</dbReference>
<dbReference type="InterPro" id="IPR001576">
    <property type="entry name" value="Phosphoglycerate_kinase"/>
</dbReference>
<dbReference type="InterPro" id="IPR015911">
    <property type="entry name" value="Phosphoglycerate_kinase_CS"/>
</dbReference>
<dbReference type="InterPro" id="IPR015824">
    <property type="entry name" value="Phosphoglycerate_kinase_N"/>
</dbReference>
<dbReference type="InterPro" id="IPR036043">
    <property type="entry name" value="Phosphoglycerate_kinase_sf"/>
</dbReference>
<dbReference type="PANTHER" id="PTHR11406">
    <property type="entry name" value="PHOSPHOGLYCERATE KINASE"/>
    <property type="match status" value="1"/>
</dbReference>
<dbReference type="PANTHER" id="PTHR11406:SF0">
    <property type="entry name" value="PHOSPHOGLYCERATE KINASE"/>
    <property type="match status" value="1"/>
</dbReference>
<dbReference type="Pfam" id="PF00162">
    <property type="entry name" value="PGK"/>
    <property type="match status" value="1"/>
</dbReference>
<dbReference type="PIRSF" id="PIRSF000724">
    <property type="entry name" value="Pgk"/>
    <property type="match status" value="1"/>
</dbReference>
<dbReference type="PRINTS" id="PR00477">
    <property type="entry name" value="PHGLYCKINASE"/>
</dbReference>
<dbReference type="SUPFAM" id="SSF53748">
    <property type="entry name" value="Phosphoglycerate kinase"/>
    <property type="match status" value="1"/>
</dbReference>
<dbReference type="PROSITE" id="PS00111">
    <property type="entry name" value="PGLYCERATE_KINASE"/>
    <property type="match status" value="1"/>
</dbReference>
<keyword id="KW-0067">ATP-binding</keyword>
<keyword id="KW-0324">Glycolysis</keyword>
<keyword id="KW-0418">Kinase</keyword>
<keyword id="KW-0460">Magnesium</keyword>
<keyword id="KW-0479">Metal-binding</keyword>
<keyword id="KW-0547">Nucleotide-binding</keyword>
<keyword id="KW-0808">Transferase</keyword>
<sequence>MLSKKLTVDKIPHMIKNKRVLVRVDFNVPIKDGKVADPTRIVSTLDTINFLKENGAKSIVLMSHLGRPKGVRQEQFSLAPVVPALEDIIGQKVNFLNDCIGTEVEGEVANTKDGNILLLENLRFYLEEEGKGVINGEKVKADPTKVESFRSQLTRLGDLYVNDAFGTCHRAHSSMVGVNVDTRAAGFLLKKELDYFSKVLEDPKRPLTVILGGAKVADKIQLINNLLDLADEMIIGGGMAFTFNKVLNNTPIGASLYDEEGAKTVHGIMEKAKEKGVKIHIPSDFVCAESFAEDAKFAYKLKMKESQDGWLGLDIGDKTIRSFDEVIRRSNTLFWNGPSGVFEWKNFAKGSHAMLQAVTESTKNGTVSVCGGGDTLNLLKQVDGAKENISHVSTGGGASLELVEGKELPGIKALSDIN</sequence>
<organism>
    <name type="scientific">Euplotes crassus</name>
    <dbReference type="NCBI Taxonomy" id="5936"/>
    <lineage>
        <taxon>Eukaryota</taxon>
        <taxon>Sar</taxon>
        <taxon>Alveolata</taxon>
        <taxon>Ciliophora</taxon>
        <taxon>Intramacronucleata</taxon>
        <taxon>Spirotrichea</taxon>
        <taxon>Hypotrichia</taxon>
        <taxon>Euplotida</taxon>
        <taxon>Euplotidae</taxon>
        <taxon>Moneuplotes</taxon>
    </lineage>
</organism>
<reference key="1">
    <citation type="submission" date="1997-04" db="EMBL/GenBank/DDBJ databases">
        <authorList>
            <person name="Pearlman R.E."/>
        </authorList>
    </citation>
    <scope>NUCLEOTIDE SEQUENCE [GENOMIC DNA]</scope>
</reference>
<accession>O02608</accession>
<gene>
    <name type="primary">PGK</name>
</gene>
<feature type="chain" id="PRO_0000145851" description="Phosphoglycerate kinase">
    <location>
        <begin position="1"/>
        <end position="418"/>
    </location>
</feature>
<feature type="binding site" evidence="2">
    <location>
        <position position="24"/>
    </location>
    <ligand>
        <name>(2R)-3-phosphoglycerate</name>
        <dbReference type="ChEBI" id="CHEBI:58272"/>
    </ligand>
</feature>
<feature type="binding site" evidence="3">
    <location>
        <position position="25"/>
    </location>
    <ligand>
        <name>(2R)-3-phosphoglycerate</name>
        <dbReference type="ChEBI" id="CHEBI:58272"/>
    </ligand>
</feature>
<feature type="binding site" evidence="2">
    <location>
        <position position="26"/>
    </location>
    <ligand>
        <name>(2R)-3-phosphoglycerate</name>
        <dbReference type="ChEBI" id="CHEBI:58272"/>
    </ligand>
</feature>
<feature type="binding site" evidence="3">
    <location>
        <position position="27"/>
    </location>
    <ligand>
        <name>(2R)-3-phosphoglycerate</name>
        <dbReference type="ChEBI" id="CHEBI:58272"/>
    </ligand>
</feature>
<feature type="binding site" evidence="3">
    <location>
        <position position="40"/>
    </location>
    <ligand>
        <name>(2R)-3-phosphoglycerate</name>
        <dbReference type="ChEBI" id="CHEBI:58272"/>
    </ligand>
</feature>
<feature type="binding site" evidence="2">
    <location>
        <position position="63"/>
    </location>
    <ligand>
        <name>(2R)-3-phosphoglycerate</name>
        <dbReference type="ChEBI" id="CHEBI:58272"/>
    </ligand>
</feature>
<feature type="binding site" evidence="3">
    <location>
        <position position="64"/>
    </location>
    <ligand>
        <name>(2R)-3-phosphoglycerate</name>
        <dbReference type="ChEBI" id="CHEBI:58272"/>
    </ligand>
</feature>
<feature type="binding site" evidence="2">
    <location>
        <position position="66"/>
    </location>
    <ligand>
        <name>(2R)-3-phosphoglycerate</name>
        <dbReference type="ChEBI" id="CHEBI:58272"/>
    </ligand>
</feature>
<feature type="binding site" evidence="3">
    <location>
        <position position="67"/>
    </location>
    <ligand>
        <name>(2R)-3-phosphoglycerate</name>
        <dbReference type="ChEBI" id="CHEBI:58272"/>
    </ligand>
</feature>
<feature type="binding site" evidence="2">
    <location>
        <position position="122"/>
    </location>
    <ligand>
        <name>(2R)-3-phosphoglycerate</name>
        <dbReference type="ChEBI" id="CHEBI:58272"/>
    </ligand>
</feature>
<feature type="binding site" evidence="3">
    <location>
        <position position="123"/>
    </location>
    <ligand>
        <name>(2R)-3-phosphoglycerate</name>
        <dbReference type="ChEBI" id="CHEBI:58272"/>
    </ligand>
</feature>
<feature type="binding site" evidence="2">
    <location>
        <position position="169"/>
    </location>
    <ligand>
        <name>(2R)-3-phosphoglycerate</name>
        <dbReference type="ChEBI" id="CHEBI:58272"/>
    </ligand>
</feature>
<feature type="binding site" evidence="3">
    <location>
        <position position="170"/>
    </location>
    <ligand>
        <name>(2R)-3-phosphoglycerate</name>
        <dbReference type="ChEBI" id="CHEBI:58272"/>
    </ligand>
</feature>
<feature type="binding site" evidence="2">
    <location>
        <position position="213"/>
    </location>
    <ligand>
        <name>ADP</name>
        <dbReference type="ChEBI" id="CHEBI:456216"/>
    </ligand>
</feature>
<feature type="binding site" evidence="2">
    <location>
        <position position="213"/>
    </location>
    <ligand>
        <name>CDP</name>
        <dbReference type="ChEBI" id="CHEBI:58069"/>
    </ligand>
</feature>
<feature type="binding site" evidence="3">
    <location>
        <position position="214"/>
    </location>
    <ligand>
        <name>AMP</name>
        <dbReference type="ChEBI" id="CHEBI:456215"/>
    </ligand>
</feature>
<feature type="binding site" evidence="3">
    <location>
        <position position="214"/>
    </location>
    <ligand>
        <name>ATP</name>
        <dbReference type="ChEBI" id="CHEBI:30616"/>
    </ligand>
</feature>
<feature type="binding site" evidence="2">
    <location>
        <position position="214"/>
    </location>
    <ligand>
        <name>Mg(2+)</name>
        <dbReference type="ChEBI" id="CHEBI:18420"/>
    </ligand>
</feature>
<feature type="binding site" evidence="3">
    <location>
        <position position="215"/>
    </location>
    <ligand>
        <name>AMP</name>
        <dbReference type="ChEBI" id="CHEBI:456215"/>
    </ligand>
</feature>
<feature type="binding site" evidence="2">
    <location>
        <position position="217"/>
    </location>
    <ligand>
        <name>Mg(2+)</name>
        <dbReference type="ChEBI" id="CHEBI:18420"/>
    </ligand>
</feature>
<feature type="binding site" evidence="2">
    <location>
        <position position="218"/>
    </location>
    <ligand>
        <name>CDP</name>
        <dbReference type="ChEBI" id="CHEBI:58069"/>
    </ligand>
</feature>
<feature type="binding site" evidence="2">
    <location>
        <position position="218"/>
    </location>
    <ligand>
        <name>Mg(2+)</name>
        <dbReference type="ChEBI" id="CHEBI:18420"/>
    </ligand>
</feature>
<feature type="binding site" evidence="3">
    <location>
        <position position="219"/>
    </location>
    <ligand>
        <name>AMP</name>
        <dbReference type="ChEBI" id="CHEBI:456215"/>
    </ligand>
</feature>
<feature type="binding site" evidence="3">
    <location>
        <position position="219"/>
    </location>
    <ligand>
        <name>ATP</name>
        <dbReference type="ChEBI" id="CHEBI:30616"/>
    </ligand>
</feature>
<feature type="binding site" evidence="2">
    <location>
        <position position="237"/>
    </location>
    <ligand>
        <name>ADP</name>
        <dbReference type="ChEBI" id="CHEBI:456216"/>
    </ligand>
</feature>
<feature type="binding site" evidence="2">
    <location>
        <position position="237"/>
    </location>
    <ligand>
        <name>CDP</name>
        <dbReference type="ChEBI" id="CHEBI:58069"/>
    </ligand>
</feature>
<feature type="binding site" evidence="3">
    <location>
        <position position="238"/>
    </location>
    <ligand>
        <name>AMP</name>
        <dbReference type="ChEBI" id="CHEBI:456215"/>
    </ligand>
</feature>
<feature type="binding site" evidence="3">
    <location>
        <position position="238"/>
    </location>
    <ligand>
        <name>ATP</name>
        <dbReference type="ChEBI" id="CHEBI:30616"/>
    </ligand>
</feature>
<feature type="binding site" evidence="3">
    <location>
        <position position="312"/>
    </location>
    <ligand>
        <name>AMP</name>
        <dbReference type="ChEBI" id="CHEBI:456215"/>
    </ligand>
</feature>
<feature type="binding site" evidence="3">
    <location>
        <position position="312"/>
    </location>
    <ligand>
        <name>ATP</name>
        <dbReference type="ChEBI" id="CHEBI:30616"/>
    </ligand>
</feature>
<feature type="binding site" evidence="2">
    <location>
        <position position="337"/>
    </location>
    <ligand>
        <name>CDP</name>
        <dbReference type="ChEBI" id="CHEBI:58069"/>
    </ligand>
</feature>
<feature type="binding site" evidence="2">
    <location>
        <position position="342"/>
    </location>
    <ligand>
        <name>ADP</name>
        <dbReference type="ChEBI" id="CHEBI:456216"/>
    </ligand>
</feature>
<feature type="binding site" evidence="2">
    <location>
        <position position="342"/>
    </location>
    <ligand>
        <name>CDP</name>
        <dbReference type="ChEBI" id="CHEBI:58069"/>
    </ligand>
</feature>
<feature type="binding site" evidence="3">
    <location>
        <position position="343"/>
    </location>
    <ligand>
        <name>AMP</name>
        <dbReference type="ChEBI" id="CHEBI:456215"/>
    </ligand>
</feature>
<feature type="binding site" evidence="3">
    <location>
        <position position="343"/>
    </location>
    <ligand>
        <name>ATP</name>
        <dbReference type="ChEBI" id="CHEBI:30616"/>
    </ligand>
</feature>
<feature type="binding site" evidence="3">
    <location>
        <position position="374"/>
    </location>
    <ligand>
        <name>ATP</name>
        <dbReference type="ChEBI" id="CHEBI:30616"/>
    </ligand>
</feature>
<feature type="binding site" evidence="3">
    <location>
        <position position="374"/>
    </location>
    <ligand>
        <name>Mg(2+)</name>
        <dbReference type="ChEBI" id="CHEBI:18420"/>
    </ligand>
</feature>
<feature type="binding site" evidence="3">
    <location>
        <position position="375"/>
    </location>
    <ligand>
        <name>ATP</name>
        <dbReference type="ChEBI" id="CHEBI:30616"/>
    </ligand>
</feature>
<proteinExistence type="inferred from homology"/>